<organism>
    <name type="scientific">Xanthomonas axonopodis pv. citri (strain 306)</name>
    <dbReference type="NCBI Taxonomy" id="190486"/>
    <lineage>
        <taxon>Bacteria</taxon>
        <taxon>Pseudomonadati</taxon>
        <taxon>Pseudomonadota</taxon>
        <taxon>Gammaproteobacteria</taxon>
        <taxon>Lysobacterales</taxon>
        <taxon>Lysobacteraceae</taxon>
        <taxon>Xanthomonas</taxon>
    </lineage>
</organism>
<accession>Q8PLG8</accession>
<sequence length="200" mass="21270">MTDVALIDAGGANLGSVRYALERLGVDARLVRDAAGLQGAQRVILPGVGAAPEAMSRLRAQGLVEPLRELQVPLIGICLGMQLLFEHSEEGDVECLGLLPGIVRHMTPALGIRIPHMGWNQLVPMRDSALLAGLPERASAYFVHGYAAPVTADTVAACDHGGLFTAVVQNGLRCGAQFHPERSAETGARILRNFLEMSFP</sequence>
<comment type="function">
    <text evidence="1">IGPS catalyzes the conversion of PRFAR and glutamine to IGP, AICAR and glutamate. The HisH subunit catalyzes the hydrolysis of glutamine to glutamate and ammonia as part of the synthesis of IGP and AICAR. The resulting ammonia molecule is channeled to the active site of HisF.</text>
</comment>
<comment type="catalytic activity">
    <reaction evidence="1">
        <text>5-[(5-phospho-1-deoxy-D-ribulos-1-ylimino)methylamino]-1-(5-phospho-beta-D-ribosyl)imidazole-4-carboxamide + L-glutamine = D-erythro-1-(imidazol-4-yl)glycerol 3-phosphate + 5-amino-1-(5-phospho-beta-D-ribosyl)imidazole-4-carboxamide + L-glutamate + H(+)</text>
        <dbReference type="Rhea" id="RHEA:24793"/>
        <dbReference type="ChEBI" id="CHEBI:15378"/>
        <dbReference type="ChEBI" id="CHEBI:29985"/>
        <dbReference type="ChEBI" id="CHEBI:58278"/>
        <dbReference type="ChEBI" id="CHEBI:58359"/>
        <dbReference type="ChEBI" id="CHEBI:58475"/>
        <dbReference type="ChEBI" id="CHEBI:58525"/>
        <dbReference type="EC" id="4.3.2.10"/>
    </reaction>
</comment>
<comment type="catalytic activity">
    <reaction evidence="1">
        <text>L-glutamine + H2O = L-glutamate + NH4(+)</text>
        <dbReference type="Rhea" id="RHEA:15889"/>
        <dbReference type="ChEBI" id="CHEBI:15377"/>
        <dbReference type="ChEBI" id="CHEBI:28938"/>
        <dbReference type="ChEBI" id="CHEBI:29985"/>
        <dbReference type="ChEBI" id="CHEBI:58359"/>
        <dbReference type="EC" id="3.5.1.2"/>
    </reaction>
</comment>
<comment type="pathway">
    <text evidence="1">Amino-acid biosynthesis; L-histidine biosynthesis; L-histidine from 5-phospho-alpha-D-ribose 1-diphosphate: step 5/9.</text>
</comment>
<comment type="subunit">
    <text evidence="1">Heterodimer of HisH and HisF.</text>
</comment>
<comment type="subcellular location">
    <subcellularLocation>
        <location evidence="1">Cytoplasm</location>
    </subcellularLocation>
</comment>
<evidence type="ECO:0000255" key="1">
    <source>
        <dbReference type="HAMAP-Rule" id="MF_00278"/>
    </source>
</evidence>
<feature type="chain" id="PRO_0000152448" description="Imidazole glycerol phosphate synthase subunit HisH">
    <location>
        <begin position="1"/>
        <end position="200"/>
    </location>
</feature>
<feature type="domain" description="Glutamine amidotransferase type-1" evidence="1">
    <location>
        <begin position="3"/>
        <end position="200"/>
    </location>
</feature>
<feature type="active site" description="Nucleophile" evidence="1">
    <location>
        <position position="78"/>
    </location>
</feature>
<feature type="active site" evidence="1">
    <location>
        <position position="179"/>
    </location>
</feature>
<feature type="active site" evidence="1">
    <location>
        <position position="181"/>
    </location>
</feature>
<gene>
    <name evidence="1" type="primary">hisH</name>
    <name type="ordered locus">XAC1832</name>
</gene>
<dbReference type="EC" id="4.3.2.10" evidence="1"/>
<dbReference type="EC" id="3.5.1.2" evidence="1"/>
<dbReference type="EMBL" id="AE008923">
    <property type="protein sequence ID" value="AAM36694.1"/>
    <property type="molecule type" value="Genomic_DNA"/>
</dbReference>
<dbReference type="RefSeq" id="WP_003486219.1">
    <property type="nucleotide sequence ID" value="NC_003919.1"/>
</dbReference>
<dbReference type="SMR" id="Q8PLG8"/>
<dbReference type="GeneID" id="66910978"/>
<dbReference type="KEGG" id="xac:XAC1832"/>
<dbReference type="eggNOG" id="COG0118">
    <property type="taxonomic scope" value="Bacteria"/>
</dbReference>
<dbReference type="HOGENOM" id="CLU_071837_0_0_6"/>
<dbReference type="UniPathway" id="UPA00031">
    <property type="reaction ID" value="UER00010"/>
</dbReference>
<dbReference type="Proteomes" id="UP000000576">
    <property type="component" value="Chromosome"/>
</dbReference>
<dbReference type="GO" id="GO:0005737">
    <property type="term" value="C:cytoplasm"/>
    <property type="evidence" value="ECO:0007669"/>
    <property type="project" value="UniProtKB-SubCell"/>
</dbReference>
<dbReference type="GO" id="GO:0004359">
    <property type="term" value="F:glutaminase activity"/>
    <property type="evidence" value="ECO:0007669"/>
    <property type="project" value="UniProtKB-EC"/>
</dbReference>
<dbReference type="GO" id="GO:0000107">
    <property type="term" value="F:imidazoleglycerol-phosphate synthase activity"/>
    <property type="evidence" value="ECO:0007669"/>
    <property type="project" value="UniProtKB-UniRule"/>
</dbReference>
<dbReference type="GO" id="GO:0016829">
    <property type="term" value="F:lyase activity"/>
    <property type="evidence" value="ECO:0007669"/>
    <property type="project" value="UniProtKB-KW"/>
</dbReference>
<dbReference type="GO" id="GO:0000105">
    <property type="term" value="P:L-histidine biosynthetic process"/>
    <property type="evidence" value="ECO:0007669"/>
    <property type="project" value="UniProtKB-UniRule"/>
</dbReference>
<dbReference type="CDD" id="cd01748">
    <property type="entry name" value="GATase1_IGP_Synthase"/>
    <property type="match status" value="1"/>
</dbReference>
<dbReference type="FunFam" id="3.40.50.880:FF:000009">
    <property type="entry name" value="Imidazole glycerol phosphate synthase subunit HisH"/>
    <property type="match status" value="1"/>
</dbReference>
<dbReference type="Gene3D" id="3.40.50.880">
    <property type="match status" value="1"/>
</dbReference>
<dbReference type="HAMAP" id="MF_00278">
    <property type="entry name" value="HisH"/>
    <property type="match status" value="1"/>
</dbReference>
<dbReference type="InterPro" id="IPR029062">
    <property type="entry name" value="Class_I_gatase-like"/>
</dbReference>
<dbReference type="InterPro" id="IPR017926">
    <property type="entry name" value="GATASE"/>
</dbReference>
<dbReference type="InterPro" id="IPR010139">
    <property type="entry name" value="Imidazole-glycPsynth_HisH"/>
</dbReference>
<dbReference type="NCBIfam" id="TIGR01855">
    <property type="entry name" value="IMP_synth_hisH"/>
    <property type="match status" value="1"/>
</dbReference>
<dbReference type="PANTHER" id="PTHR42701">
    <property type="entry name" value="IMIDAZOLE GLYCEROL PHOSPHATE SYNTHASE SUBUNIT HISH"/>
    <property type="match status" value="1"/>
</dbReference>
<dbReference type="PANTHER" id="PTHR42701:SF1">
    <property type="entry name" value="IMIDAZOLE GLYCEROL PHOSPHATE SYNTHASE SUBUNIT HISH"/>
    <property type="match status" value="1"/>
</dbReference>
<dbReference type="Pfam" id="PF00117">
    <property type="entry name" value="GATase"/>
    <property type="match status" value="1"/>
</dbReference>
<dbReference type="PIRSF" id="PIRSF000495">
    <property type="entry name" value="Amidotransf_hisH"/>
    <property type="match status" value="1"/>
</dbReference>
<dbReference type="SUPFAM" id="SSF52317">
    <property type="entry name" value="Class I glutamine amidotransferase-like"/>
    <property type="match status" value="1"/>
</dbReference>
<dbReference type="PROSITE" id="PS51273">
    <property type="entry name" value="GATASE_TYPE_1"/>
    <property type="match status" value="1"/>
</dbReference>
<proteinExistence type="inferred from homology"/>
<name>HIS5_XANAC</name>
<keyword id="KW-0028">Amino-acid biosynthesis</keyword>
<keyword id="KW-0963">Cytoplasm</keyword>
<keyword id="KW-0315">Glutamine amidotransferase</keyword>
<keyword id="KW-0368">Histidine biosynthesis</keyword>
<keyword id="KW-0378">Hydrolase</keyword>
<keyword id="KW-0456">Lyase</keyword>
<protein>
    <recommendedName>
        <fullName evidence="1">Imidazole glycerol phosphate synthase subunit HisH</fullName>
        <ecNumber evidence="1">4.3.2.10</ecNumber>
    </recommendedName>
    <alternativeName>
        <fullName evidence="1">IGP synthase glutaminase subunit</fullName>
        <ecNumber evidence="1">3.5.1.2</ecNumber>
    </alternativeName>
    <alternativeName>
        <fullName evidence="1">IGP synthase subunit HisH</fullName>
    </alternativeName>
    <alternativeName>
        <fullName evidence="1">ImGP synthase subunit HisH</fullName>
        <shortName evidence="1">IGPS subunit HisH</shortName>
    </alternativeName>
</protein>
<reference key="1">
    <citation type="journal article" date="2002" name="Nature">
        <title>Comparison of the genomes of two Xanthomonas pathogens with differing host specificities.</title>
        <authorList>
            <person name="da Silva A.C.R."/>
            <person name="Ferro J.A."/>
            <person name="Reinach F.C."/>
            <person name="Farah C.S."/>
            <person name="Furlan L.R."/>
            <person name="Quaggio R.B."/>
            <person name="Monteiro-Vitorello C.B."/>
            <person name="Van Sluys M.A."/>
            <person name="Almeida N.F. Jr."/>
            <person name="Alves L.M.C."/>
            <person name="do Amaral A.M."/>
            <person name="Bertolini M.C."/>
            <person name="Camargo L.E.A."/>
            <person name="Camarotte G."/>
            <person name="Cannavan F."/>
            <person name="Cardozo J."/>
            <person name="Chambergo F."/>
            <person name="Ciapina L.P."/>
            <person name="Cicarelli R.M.B."/>
            <person name="Coutinho L.L."/>
            <person name="Cursino-Santos J.R."/>
            <person name="El-Dorry H."/>
            <person name="Faria J.B."/>
            <person name="Ferreira A.J.S."/>
            <person name="Ferreira R.C.C."/>
            <person name="Ferro M.I.T."/>
            <person name="Formighieri E.F."/>
            <person name="Franco M.C."/>
            <person name="Greggio C.C."/>
            <person name="Gruber A."/>
            <person name="Katsuyama A.M."/>
            <person name="Kishi L.T."/>
            <person name="Leite R.P."/>
            <person name="Lemos E.G.M."/>
            <person name="Lemos M.V.F."/>
            <person name="Locali E.C."/>
            <person name="Machado M.A."/>
            <person name="Madeira A.M.B.N."/>
            <person name="Martinez-Rossi N.M."/>
            <person name="Martins E.C."/>
            <person name="Meidanis J."/>
            <person name="Menck C.F.M."/>
            <person name="Miyaki C.Y."/>
            <person name="Moon D.H."/>
            <person name="Moreira L.M."/>
            <person name="Novo M.T.M."/>
            <person name="Okura V.K."/>
            <person name="Oliveira M.C."/>
            <person name="Oliveira V.R."/>
            <person name="Pereira H.A."/>
            <person name="Rossi A."/>
            <person name="Sena J.A.D."/>
            <person name="Silva C."/>
            <person name="de Souza R.F."/>
            <person name="Spinola L.A.F."/>
            <person name="Takita M.A."/>
            <person name="Tamura R.E."/>
            <person name="Teixeira E.C."/>
            <person name="Tezza R.I.D."/>
            <person name="Trindade dos Santos M."/>
            <person name="Truffi D."/>
            <person name="Tsai S.M."/>
            <person name="White F.F."/>
            <person name="Setubal J.C."/>
            <person name="Kitajima J.P."/>
        </authorList>
    </citation>
    <scope>NUCLEOTIDE SEQUENCE [LARGE SCALE GENOMIC DNA]</scope>
    <source>
        <strain>306</strain>
    </source>
</reference>